<organism>
    <name type="scientific">Cereibacter sphaeroides (strain ATCC 17023 / DSM 158 / JCM 6121 / CCUG 31486 / LMG 2827 / NBRC 12203 / NCIMB 8253 / ATH 2.4.1.)</name>
    <name type="common">Rhodobacter sphaeroides</name>
    <dbReference type="NCBI Taxonomy" id="272943"/>
    <lineage>
        <taxon>Bacteria</taxon>
        <taxon>Pseudomonadati</taxon>
        <taxon>Pseudomonadota</taxon>
        <taxon>Alphaproteobacteria</taxon>
        <taxon>Rhodobacterales</taxon>
        <taxon>Paracoccaceae</taxon>
        <taxon>Cereibacter</taxon>
    </lineage>
</organism>
<name>Y264_CERS4</name>
<protein>
    <recommendedName>
        <fullName evidence="1">Nucleotide-binding protein RHOS4_02640</fullName>
    </recommendedName>
</protein>
<proteinExistence type="inferred from homology"/>
<dbReference type="EMBL" id="CP000143">
    <property type="protein sequence ID" value="ABA77832.1"/>
    <property type="molecule type" value="Genomic_DNA"/>
</dbReference>
<dbReference type="RefSeq" id="YP_351733.1">
    <property type="nucleotide sequence ID" value="NC_007493.2"/>
</dbReference>
<dbReference type="SMR" id="Q3J5V2"/>
<dbReference type="STRING" id="272943.RSP_1684"/>
<dbReference type="EnsemblBacteria" id="ABA77832">
    <property type="protein sequence ID" value="ABA77832"/>
    <property type="gene ID" value="RSP_1684"/>
</dbReference>
<dbReference type="KEGG" id="rsp:RSP_1684"/>
<dbReference type="PATRIC" id="fig|272943.9.peg.562"/>
<dbReference type="eggNOG" id="COG1660">
    <property type="taxonomic scope" value="Bacteria"/>
</dbReference>
<dbReference type="OrthoDB" id="9784461at2"/>
<dbReference type="PhylomeDB" id="Q3J5V2"/>
<dbReference type="Proteomes" id="UP000002703">
    <property type="component" value="Chromosome 1"/>
</dbReference>
<dbReference type="GO" id="GO:0005524">
    <property type="term" value="F:ATP binding"/>
    <property type="evidence" value="ECO:0007669"/>
    <property type="project" value="UniProtKB-UniRule"/>
</dbReference>
<dbReference type="GO" id="GO:0005525">
    <property type="term" value="F:GTP binding"/>
    <property type="evidence" value="ECO:0007669"/>
    <property type="project" value="UniProtKB-UniRule"/>
</dbReference>
<dbReference type="Gene3D" id="3.40.50.300">
    <property type="entry name" value="P-loop containing nucleotide triphosphate hydrolases"/>
    <property type="match status" value="1"/>
</dbReference>
<dbReference type="HAMAP" id="MF_00636">
    <property type="entry name" value="RapZ_like"/>
    <property type="match status" value="1"/>
</dbReference>
<dbReference type="InterPro" id="IPR027417">
    <property type="entry name" value="P-loop_NTPase"/>
</dbReference>
<dbReference type="InterPro" id="IPR005337">
    <property type="entry name" value="RapZ-like"/>
</dbReference>
<dbReference type="InterPro" id="IPR053930">
    <property type="entry name" value="RapZ-like_N"/>
</dbReference>
<dbReference type="InterPro" id="IPR053931">
    <property type="entry name" value="RapZ_C"/>
</dbReference>
<dbReference type="NCBIfam" id="NF003828">
    <property type="entry name" value="PRK05416.1"/>
    <property type="match status" value="1"/>
</dbReference>
<dbReference type="PANTHER" id="PTHR30448">
    <property type="entry name" value="RNASE ADAPTER PROTEIN RAPZ"/>
    <property type="match status" value="1"/>
</dbReference>
<dbReference type="PANTHER" id="PTHR30448:SF0">
    <property type="entry name" value="RNASE ADAPTER PROTEIN RAPZ"/>
    <property type="match status" value="1"/>
</dbReference>
<dbReference type="Pfam" id="PF22740">
    <property type="entry name" value="PapZ_C"/>
    <property type="match status" value="1"/>
</dbReference>
<dbReference type="Pfam" id="PF03668">
    <property type="entry name" value="RapZ-like_N"/>
    <property type="match status" value="1"/>
</dbReference>
<dbReference type="PIRSF" id="PIRSF005052">
    <property type="entry name" value="P-loopkin"/>
    <property type="match status" value="1"/>
</dbReference>
<dbReference type="SUPFAM" id="SSF52540">
    <property type="entry name" value="P-loop containing nucleoside triphosphate hydrolases"/>
    <property type="match status" value="1"/>
</dbReference>
<feature type="chain" id="PRO_0000258989" description="Nucleotide-binding protein RHOS4_02640">
    <location>
        <begin position="1"/>
        <end position="302"/>
    </location>
</feature>
<feature type="binding site" evidence="1">
    <location>
        <begin position="15"/>
        <end position="22"/>
    </location>
    <ligand>
        <name>ATP</name>
        <dbReference type="ChEBI" id="CHEBI:30616"/>
    </ligand>
</feature>
<feature type="binding site" evidence="1">
    <location>
        <begin position="62"/>
        <end position="65"/>
    </location>
    <ligand>
        <name>GTP</name>
        <dbReference type="ChEBI" id="CHEBI:37565"/>
    </ligand>
</feature>
<keyword id="KW-0067">ATP-binding</keyword>
<keyword id="KW-0342">GTP-binding</keyword>
<keyword id="KW-0547">Nucleotide-binding</keyword>
<keyword id="KW-1185">Reference proteome</keyword>
<gene>
    <name type="ordered locus">RHOS4_02640</name>
    <name type="ORF">RSP_1684</name>
</gene>
<reference key="1">
    <citation type="submission" date="2005-09" db="EMBL/GenBank/DDBJ databases">
        <title>Complete sequence of chromosome 1 of Rhodobacter sphaeroides 2.4.1.</title>
        <authorList>
            <person name="Copeland A."/>
            <person name="Lucas S."/>
            <person name="Lapidus A."/>
            <person name="Barry K."/>
            <person name="Detter J.C."/>
            <person name="Glavina T."/>
            <person name="Hammon N."/>
            <person name="Israni S."/>
            <person name="Pitluck S."/>
            <person name="Richardson P."/>
            <person name="Mackenzie C."/>
            <person name="Choudhary M."/>
            <person name="Larimer F."/>
            <person name="Hauser L.J."/>
            <person name="Land M."/>
            <person name="Donohue T.J."/>
            <person name="Kaplan S."/>
        </authorList>
    </citation>
    <scope>NUCLEOTIDE SEQUENCE [LARGE SCALE GENOMIC DNA]</scope>
    <source>
        <strain>ATCC 17023 / DSM 158 / JCM 6121 / CCUG 31486 / LMG 2827 / NBRC 12203 / NCIMB 8253 / ATH 2.4.1.</strain>
    </source>
</reference>
<comment type="function">
    <text evidence="1">Displays ATPase and GTPase activities.</text>
</comment>
<comment type="similarity">
    <text evidence="1">Belongs to the RapZ-like family.</text>
</comment>
<accession>Q3J5V2</accession>
<evidence type="ECO:0000255" key="1">
    <source>
        <dbReference type="HAMAP-Rule" id="MF_00636"/>
    </source>
</evidence>
<sequence>MVEPVQEYRLVLVTGPSGAGRTTAINALEDMGYEVIDNLPLSFVPRLIEGPSIGRPIALGLDVRNRDFNATALIELIDRLTQDPRVALEVLYVDCSASELIRRYNQTRRRHPLAPAETPAEGVEREIDLLAPVRVRADHLIDTSEMSPHDLKAELSRWFDRGAATRLAVSVQSFSYKRGVPRGVDMIFDCRFLKNPYWVESLRALDGREASVADYISSDPRFAPFFEKLRDLVLFLLPAQLEEGKAHLSLGFGCTGGQHRSVAVAELLGNALAEAGWPVSKRHRELERRAAAVLPTHQGEKA</sequence>